<name>NUON_SALPA</name>
<evidence type="ECO:0000255" key="1">
    <source>
        <dbReference type="HAMAP-Rule" id="MF_00445"/>
    </source>
</evidence>
<evidence type="ECO:0000305" key="2"/>
<protein>
    <recommendedName>
        <fullName evidence="1">NADH-quinone oxidoreductase subunit N</fullName>
        <ecNumber evidence="1">7.1.1.-</ecNumber>
    </recommendedName>
    <alternativeName>
        <fullName evidence="1">NADH dehydrogenase I subunit N</fullName>
    </alternativeName>
    <alternativeName>
        <fullName evidence="1">NDH-1 subunit N</fullName>
    </alternativeName>
</protein>
<keyword id="KW-0997">Cell inner membrane</keyword>
<keyword id="KW-1003">Cell membrane</keyword>
<keyword id="KW-0472">Membrane</keyword>
<keyword id="KW-0520">NAD</keyword>
<keyword id="KW-0874">Quinone</keyword>
<keyword id="KW-1278">Translocase</keyword>
<keyword id="KW-0812">Transmembrane</keyword>
<keyword id="KW-1133">Transmembrane helix</keyword>
<keyword id="KW-0813">Transport</keyword>
<keyword id="KW-0830">Ubiquinone</keyword>
<feature type="chain" id="PRO_0000249446" description="NADH-quinone oxidoreductase subunit N">
    <location>
        <begin position="1"/>
        <end position="485"/>
    </location>
</feature>
<feature type="transmembrane region" description="Helical" evidence="1">
    <location>
        <begin position="8"/>
        <end position="28"/>
    </location>
</feature>
<feature type="transmembrane region" description="Helical" evidence="1">
    <location>
        <begin position="35"/>
        <end position="55"/>
    </location>
</feature>
<feature type="transmembrane region" description="Helical" evidence="1">
    <location>
        <begin position="71"/>
        <end position="91"/>
    </location>
</feature>
<feature type="transmembrane region" description="Helical" evidence="1">
    <location>
        <begin position="105"/>
        <end position="125"/>
    </location>
</feature>
<feature type="transmembrane region" description="Helical" evidence="1">
    <location>
        <begin position="127"/>
        <end position="147"/>
    </location>
</feature>
<feature type="transmembrane region" description="Helical" evidence="1">
    <location>
        <begin position="159"/>
        <end position="179"/>
    </location>
</feature>
<feature type="transmembrane region" description="Helical" evidence="1">
    <location>
        <begin position="203"/>
        <end position="223"/>
    </location>
</feature>
<feature type="transmembrane region" description="Helical" evidence="1">
    <location>
        <begin position="235"/>
        <end position="255"/>
    </location>
</feature>
<feature type="transmembrane region" description="Helical" evidence="1">
    <location>
        <begin position="271"/>
        <end position="291"/>
    </location>
</feature>
<feature type="transmembrane region" description="Helical" evidence="1">
    <location>
        <begin position="297"/>
        <end position="317"/>
    </location>
</feature>
<feature type="transmembrane region" description="Helical" evidence="1">
    <location>
        <begin position="326"/>
        <end position="346"/>
    </location>
</feature>
<feature type="transmembrane region" description="Helical" evidence="1">
    <location>
        <begin position="373"/>
        <end position="393"/>
    </location>
</feature>
<feature type="transmembrane region" description="Helical" evidence="1">
    <location>
        <begin position="408"/>
        <end position="430"/>
    </location>
</feature>
<feature type="transmembrane region" description="Helical" evidence="1">
    <location>
        <begin position="455"/>
        <end position="475"/>
    </location>
</feature>
<sequence length="485" mass="51997">MTITPQHLIALLPLLIVGLTVVVVMLSIAWRRNHFLNATLSVIGLNAALVSLWFVGQAGAMDVTPLMRVDGFAMLYTGLVLLASLATCTFAYPWLEGYNDNQEEFYLLVLIASLGGILLANANHLATLFLGIELISLPLFGLIGYAFRQKRSLEASIKYTILSAAASSFLLFGMALVYAQSGNLSFEALGKSLGDGMLHEPLLLAGFGLMIVGPGFKLSLVPFHLWTPDVYQGAPAPVSTFLATASKIAIFGVVMRLFLYAPVGDSEAVRVVLGIIAFASIIFGNLMALSQTNIKRLLGYSSISHLGYLLVALIALQSGEMSMEAVGVYLAGYLFSSLGAFGVVSLMSSPFRGPDADSLYSYRGLFWHRPVLAAVMTVMMLSLAGIPMTLGFIGKFYVLAVGVQASLWWLVAAVVVGSAIGLYYYLRVAVSLYLHAPQQPGRDAPTNWQYSAGGIVVLISALLVLVLGVWPQPLISLVQLATPLM</sequence>
<organism>
    <name type="scientific">Salmonella paratyphi A (strain ATCC 9150 / SARB42)</name>
    <dbReference type="NCBI Taxonomy" id="295319"/>
    <lineage>
        <taxon>Bacteria</taxon>
        <taxon>Pseudomonadati</taxon>
        <taxon>Pseudomonadota</taxon>
        <taxon>Gammaproteobacteria</taxon>
        <taxon>Enterobacterales</taxon>
        <taxon>Enterobacteriaceae</taxon>
        <taxon>Salmonella</taxon>
    </lineage>
</organism>
<accession>Q5PN71</accession>
<dbReference type="EC" id="7.1.1.-" evidence="1"/>
<dbReference type="EMBL" id="CP000026">
    <property type="protein sequence ID" value="AAV76550.1"/>
    <property type="status" value="ALT_INIT"/>
    <property type="molecule type" value="Genomic_DNA"/>
</dbReference>
<dbReference type="RefSeq" id="WP_000156674.1">
    <property type="nucleotide sequence ID" value="NC_006511.1"/>
</dbReference>
<dbReference type="SMR" id="Q5PN71"/>
<dbReference type="DNASU" id="3177226"/>
<dbReference type="KEGG" id="spt:SPA0548"/>
<dbReference type="HOGENOM" id="CLU_007100_1_5_6"/>
<dbReference type="Proteomes" id="UP000008185">
    <property type="component" value="Chromosome"/>
</dbReference>
<dbReference type="GO" id="GO:0005886">
    <property type="term" value="C:plasma membrane"/>
    <property type="evidence" value="ECO:0007669"/>
    <property type="project" value="UniProtKB-SubCell"/>
</dbReference>
<dbReference type="GO" id="GO:0008137">
    <property type="term" value="F:NADH dehydrogenase (ubiquinone) activity"/>
    <property type="evidence" value="ECO:0007669"/>
    <property type="project" value="InterPro"/>
</dbReference>
<dbReference type="GO" id="GO:0050136">
    <property type="term" value="F:NADH:ubiquinone reductase (non-electrogenic) activity"/>
    <property type="evidence" value="ECO:0007669"/>
    <property type="project" value="UniProtKB-UniRule"/>
</dbReference>
<dbReference type="GO" id="GO:0048038">
    <property type="term" value="F:quinone binding"/>
    <property type="evidence" value="ECO:0007669"/>
    <property type="project" value="UniProtKB-KW"/>
</dbReference>
<dbReference type="GO" id="GO:0042773">
    <property type="term" value="P:ATP synthesis coupled electron transport"/>
    <property type="evidence" value="ECO:0007669"/>
    <property type="project" value="InterPro"/>
</dbReference>
<dbReference type="HAMAP" id="MF_00445">
    <property type="entry name" value="NDH1_NuoN_1"/>
    <property type="match status" value="1"/>
</dbReference>
<dbReference type="InterPro" id="IPR010096">
    <property type="entry name" value="NADH-Q_OxRdtase_suN/2"/>
</dbReference>
<dbReference type="InterPro" id="IPR001750">
    <property type="entry name" value="ND/Mrp_TM"/>
</dbReference>
<dbReference type="NCBIfam" id="TIGR01770">
    <property type="entry name" value="NDH_I_N"/>
    <property type="match status" value="1"/>
</dbReference>
<dbReference type="NCBIfam" id="NF004439">
    <property type="entry name" value="PRK05777.1-1"/>
    <property type="match status" value="1"/>
</dbReference>
<dbReference type="PANTHER" id="PTHR22773">
    <property type="entry name" value="NADH DEHYDROGENASE"/>
    <property type="match status" value="1"/>
</dbReference>
<dbReference type="Pfam" id="PF00361">
    <property type="entry name" value="Proton_antipo_M"/>
    <property type="match status" value="1"/>
</dbReference>
<comment type="function">
    <text evidence="1">NDH-1 shuttles electrons from NADH, via FMN and iron-sulfur (Fe-S) centers, to quinones in the respiratory chain. The immediate electron acceptor for the enzyme in this species is believed to be ubiquinone. Couples the redox reaction to proton translocation (for every two electrons transferred, four hydrogen ions are translocated across the cytoplasmic membrane), and thus conserves the redox energy in a proton gradient.</text>
</comment>
<comment type="catalytic activity">
    <reaction evidence="1">
        <text>a quinone + NADH + 5 H(+)(in) = a quinol + NAD(+) + 4 H(+)(out)</text>
        <dbReference type="Rhea" id="RHEA:57888"/>
        <dbReference type="ChEBI" id="CHEBI:15378"/>
        <dbReference type="ChEBI" id="CHEBI:24646"/>
        <dbReference type="ChEBI" id="CHEBI:57540"/>
        <dbReference type="ChEBI" id="CHEBI:57945"/>
        <dbReference type="ChEBI" id="CHEBI:132124"/>
    </reaction>
</comment>
<comment type="subunit">
    <text evidence="1">NDH-1 is composed of 13 different subunits. Subunits NuoA, H, J, K, L, M, N constitute the membrane sector of the complex.</text>
</comment>
<comment type="subcellular location">
    <subcellularLocation>
        <location evidence="1">Cell inner membrane</location>
        <topology evidence="1">Multi-pass membrane protein</topology>
    </subcellularLocation>
</comment>
<comment type="similarity">
    <text evidence="1">Belongs to the complex I subunit 2 family.</text>
</comment>
<comment type="sequence caution" evidence="2">
    <conflict type="erroneous initiation">
        <sequence resource="EMBL-CDS" id="AAV76550"/>
    </conflict>
</comment>
<gene>
    <name evidence="1" type="primary">nuoN</name>
    <name type="ordered locus">SPA0548</name>
</gene>
<proteinExistence type="inferred from homology"/>
<reference key="1">
    <citation type="journal article" date="2004" name="Nat. Genet.">
        <title>Comparison of genome degradation in Paratyphi A and Typhi, human-restricted serovars of Salmonella enterica that cause typhoid.</title>
        <authorList>
            <person name="McClelland M."/>
            <person name="Sanderson K.E."/>
            <person name="Clifton S.W."/>
            <person name="Latreille P."/>
            <person name="Porwollik S."/>
            <person name="Sabo A."/>
            <person name="Meyer R."/>
            <person name="Bieri T."/>
            <person name="Ozersky P."/>
            <person name="McLellan M."/>
            <person name="Harkins C.R."/>
            <person name="Wang C."/>
            <person name="Nguyen C."/>
            <person name="Berghoff A."/>
            <person name="Elliott G."/>
            <person name="Kohlberg S."/>
            <person name="Strong C."/>
            <person name="Du F."/>
            <person name="Carter J."/>
            <person name="Kremizki C."/>
            <person name="Layman D."/>
            <person name="Leonard S."/>
            <person name="Sun H."/>
            <person name="Fulton L."/>
            <person name="Nash W."/>
            <person name="Miner T."/>
            <person name="Minx P."/>
            <person name="Delehaunty K."/>
            <person name="Fronick C."/>
            <person name="Magrini V."/>
            <person name="Nhan M."/>
            <person name="Warren W."/>
            <person name="Florea L."/>
            <person name="Spieth J."/>
            <person name="Wilson R.K."/>
        </authorList>
    </citation>
    <scope>NUCLEOTIDE SEQUENCE [LARGE SCALE GENOMIC DNA]</scope>
    <source>
        <strain>ATCC 9150 / SARB42</strain>
    </source>
</reference>